<comment type="function">
    <text evidence="1">Specifically methylates the adenine in position 37 of tRNA(1)(Val) (anticodon cmo5UAC).</text>
</comment>
<comment type="catalytic activity">
    <reaction evidence="1">
        <text>adenosine(37) in tRNA1(Val) + S-adenosyl-L-methionine = N(6)-methyladenosine(37) in tRNA1(Val) + S-adenosyl-L-homocysteine + H(+)</text>
        <dbReference type="Rhea" id="RHEA:43160"/>
        <dbReference type="Rhea" id="RHEA-COMP:10369"/>
        <dbReference type="Rhea" id="RHEA-COMP:10370"/>
        <dbReference type="ChEBI" id="CHEBI:15378"/>
        <dbReference type="ChEBI" id="CHEBI:57856"/>
        <dbReference type="ChEBI" id="CHEBI:59789"/>
        <dbReference type="ChEBI" id="CHEBI:74411"/>
        <dbReference type="ChEBI" id="CHEBI:74449"/>
        <dbReference type="EC" id="2.1.1.223"/>
    </reaction>
</comment>
<comment type="subcellular location">
    <subcellularLocation>
        <location evidence="1">Cytoplasm</location>
    </subcellularLocation>
</comment>
<comment type="similarity">
    <text evidence="1">Belongs to the methyltransferase superfamily. tRNA (adenine-N(6)-)-methyltransferase family.</text>
</comment>
<reference key="1">
    <citation type="journal article" date="2006" name="Mol. Microbiol.">
        <title>Role of pathogenicity island-associated integrases in the genome plasticity of uropathogenic Escherichia coli strain 536.</title>
        <authorList>
            <person name="Hochhut B."/>
            <person name="Wilde C."/>
            <person name="Balling G."/>
            <person name="Middendorf B."/>
            <person name="Dobrindt U."/>
            <person name="Brzuszkiewicz E."/>
            <person name="Gottschalk G."/>
            <person name="Carniel E."/>
            <person name="Hacker J."/>
        </authorList>
    </citation>
    <scope>NUCLEOTIDE SEQUENCE [LARGE SCALE GENOMIC DNA]</scope>
    <source>
        <strain>536 / UPEC</strain>
    </source>
</reference>
<organism>
    <name type="scientific">Escherichia coli O6:K15:H31 (strain 536 / UPEC)</name>
    <dbReference type="NCBI Taxonomy" id="362663"/>
    <lineage>
        <taxon>Bacteria</taxon>
        <taxon>Pseudomonadati</taxon>
        <taxon>Pseudomonadota</taxon>
        <taxon>Gammaproteobacteria</taxon>
        <taxon>Enterobacterales</taxon>
        <taxon>Enterobacteriaceae</taxon>
        <taxon>Escherichia</taxon>
    </lineage>
</organism>
<feature type="chain" id="PRO_0000387373" description="tRNA1(Val) (adenine(37)-N6)-methyltransferase">
    <location>
        <begin position="1"/>
        <end position="245"/>
    </location>
</feature>
<evidence type="ECO:0000255" key="1">
    <source>
        <dbReference type="HAMAP-Rule" id="MF_01872"/>
    </source>
</evidence>
<protein>
    <recommendedName>
        <fullName evidence="1">tRNA1(Val) (adenine(37)-N6)-methyltransferase</fullName>
        <ecNumber evidence="1">2.1.1.223</ecNumber>
    </recommendedName>
    <alternativeName>
        <fullName evidence="1">tRNA m6A37 methyltransferase</fullName>
    </alternativeName>
</protein>
<proteinExistence type="inferred from homology"/>
<keyword id="KW-0963">Cytoplasm</keyword>
<keyword id="KW-0489">Methyltransferase</keyword>
<keyword id="KW-0949">S-adenosyl-L-methionine</keyword>
<keyword id="KW-0808">Transferase</keyword>
<keyword id="KW-0819">tRNA processing</keyword>
<dbReference type="EC" id="2.1.1.223" evidence="1"/>
<dbReference type="EMBL" id="CP000247">
    <property type="protein sequence ID" value="ABG70566.1"/>
    <property type="molecule type" value="Genomic_DNA"/>
</dbReference>
<dbReference type="RefSeq" id="WP_011579164.1">
    <property type="nucleotide sequence ID" value="NC_008253.1"/>
</dbReference>
<dbReference type="SMR" id="Q0TER3"/>
<dbReference type="KEGG" id="ecp:ECP_2577"/>
<dbReference type="HOGENOM" id="CLU_061983_0_0_6"/>
<dbReference type="Proteomes" id="UP000009182">
    <property type="component" value="Chromosome"/>
</dbReference>
<dbReference type="GO" id="GO:0005737">
    <property type="term" value="C:cytoplasm"/>
    <property type="evidence" value="ECO:0007669"/>
    <property type="project" value="UniProtKB-SubCell"/>
</dbReference>
<dbReference type="GO" id="GO:0003676">
    <property type="term" value="F:nucleic acid binding"/>
    <property type="evidence" value="ECO:0007669"/>
    <property type="project" value="InterPro"/>
</dbReference>
<dbReference type="GO" id="GO:0016430">
    <property type="term" value="F:tRNA (adenine-N6)-methyltransferase activity"/>
    <property type="evidence" value="ECO:0007669"/>
    <property type="project" value="UniProtKB-UniRule"/>
</dbReference>
<dbReference type="GO" id="GO:0032259">
    <property type="term" value="P:methylation"/>
    <property type="evidence" value="ECO:0007669"/>
    <property type="project" value="UniProtKB-KW"/>
</dbReference>
<dbReference type="GO" id="GO:0008033">
    <property type="term" value="P:tRNA processing"/>
    <property type="evidence" value="ECO:0007669"/>
    <property type="project" value="UniProtKB-UniRule"/>
</dbReference>
<dbReference type="CDD" id="cd02440">
    <property type="entry name" value="AdoMet_MTases"/>
    <property type="match status" value="1"/>
</dbReference>
<dbReference type="FunFam" id="3.40.50.150:FF:000087">
    <property type="entry name" value="tRNA1(Val) (adenine(37)-N6)-methyltransferase"/>
    <property type="match status" value="1"/>
</dbReference>
<dbReference type="Gene3D" id="3.40.50.150">
    <property type="entry name" value="Vaccinia Virus protein VP39"/>
    <property type="match status" value="1"/>
</dbReference>
<dbReference type="HAMAP" id="MF_01872">
    <property type="entry name" value="tRNA_methyltr_YfiC"/>
    <property type="match status" value="1"/>
</dbReference>
<dbReference type="InterPro" id="IPR002052">
    <property type="entry name" value="DNA_methylase_N6_adenine_CS"/>
</dbReference>
<dbReference type="InterPro" id="IPR029063">
    <property type="entry name" value="SAM-dependent_MTases_sf"/>
</dbReference>
<dbReference type="InterPro" id="IPR007848">
    <property type="entry name" value="Small_mtfrase_dom"/>
</dbReference>
<dbReference type="InterPro" id="IPR050210">
    <property type="entry name" value="tRNA_Adenine-N(6)_MTase"/>
</dbReference>
<dbReference type="InterPro" id="IPR022882">
    <property type="entry name" value="tRNA_adenine-N6_MeTrfase"/>
</dbReference>
<dbReference type="NCBIfam" id="NF047853">
    <property type="entry name" value="tRm6a37MtseTrmN"/>
    <property type="match status" value="1"/>
</dbReference>
<dbReference type="PANTHER" id="PTHR47739">
    <property type="entry name" value="TRNA1(VAL) (ADENINE(37)-N6)-METHYLTRANSFERASE"/>
    <property type="match status" value="1"/>
</dbReference>
<dbReference type="PANTHER" id="PTHR47739:SF1">
    <property type="entry name" value="TRNA1(VAL) (ADENINE(37)-N6)-METHYLTRANSFERASE"/>
    <property type="match status" value="1"/>
</dbReference>
<dbReference type="Pfam" id="PF05175">
    <property type="entry name" value="MTS"/>
    <property type="match status" value="1"/>
</dbReference>
<dbReference type="SUPFAM" id="SSF53335">
    <property type="entry name" value="S-adenosyl-L-methionine-dependent methyltransferases"/>
    <property type="match status" value="1"/>
</dbReference>
<dbReference type="PROSITE" id="PS00092">
    <property type="entry name" value="N6_MTASE"/>
    <property type="match status" value="1"/>
</dbReference>
<sequence>MSQSTSVFRRNGFTFKQFFVAHDRCAMKAGTDGILLGAWAPVAGVKRCLDIGAGSGLLALMLAQRTDDSVMIDAVELESEAAAQAQENINQSPWAERINVHTADILQWITQQTVRFDLIISNPPYYQQGVECATPQREQARYTTTLDHPSLLTCAAECITEEGFFCVVLPEQIGNGFTELALSMGWHLRLRTDVAENEARLPHRVLLAFSPQAGECFSDRLVIRGPDQNYSEAYTALTQAFYLFM</sequence>
<accession>Q0TER3</accession>
<name>TRMN6_ECOL5</name>
<gene>
    <name evidence="1" type="primary">yfiC</name>
    <name type="ordered locus">ECP_2577</name>
</gene>